<evidence type="ECO:0000255" key="1">
    <source>
        <dbReference type="PROSITE-ProRule" id="PRU00278"/>
    </source>
</evidence>
<evidence type="ECO:0000305" key="2"/>
<gene>
    <name type="primary">nifM</name>
</gene>
<organism>
    <name type="scientific">Klebsiella oxytoca</name>
    <dbReference type="NCBI Taxonomy" id="571"/>
    <lineage>
        <taxon>Bacteria</taxon>
        <taxon>Pseudomonadati</taxon>
        <taxon>Pseudomonadota</taxon>
        <taxon>Gammaproteobacteria</taxon>
        <taxon>Enterobacterales</taxon>
        <taxon>Enterobacteriaceae</taxon>
        <taxon>Klebsiella/Raoultella group</taxon>
        <taxon>Klebsiella</taxon>
    </lineage>
</organism>
<dbReference type="EC" id="5.2.1.8"/>
<dbReference type="EMBL" id="X05887">
    <property type="protein sequence ID" value="CAA29313.1"/>
    <property type="molecule type" value="Genomic_DNA"/>
</dbReference>
<dbReference type="SMR" id="P0A3Z0"/>
<dbReference type="STRING" id="571.AB185_16970"/>
<dbReference type="eggNOG" id="COG0760">
    <property type="taxonomic scope" value="Bacteria"/>
</dbReference>
<dbReference type="GO" id="GO:0003755">
    <property type="term" value="F:peptidyl-prolyl cis-trans isomerase activity"/>
    <property type="evidence" value="ECO:0007669"/>
    <property type="project" value="UniProtKB-KW"/>
</dbReference>
<dbReference type="GO" id="GO:0009399">
    <property type="term" value="P:nitrogen fixation"/>
    <property type="evidence" value="ECO:0007669"/>
    <property type="project" value="UniProtKB-KW"/>
</dbReference>
<dbReference type="Gene3D" id="3.10.50.40">
    <property type="match status" value="1"/>
</dbReference>
<dbReference type="InterPro" id="IPR014282">
    <property type="entry name" value="Nitrogen_fix_NifM"/>
</dbReference>
<dbReference type="InterPro" id="IPR046357">
    <property type="entry name" value="PPIase_dom_sf"/>
</dbReference>
<dbReference type="InterPro" id="IPR000297">
    <property type="entry name" value="PPIase_PpiC"/>
</dbReference>
<dbReference type="InterPro" id="IPR023058">
    <property type="entry name" value="PPIase_PpiC_CS"/>
</dbReference>
<dbReference type="InterPro" id="IPR050245">
    <property type="entry name" value="PrsA_foldase"/>
</dbReference>
<dbReference type="NCBIfam" id="TIGR02933">
    <property type="entry name" value="nifM_nitrog"/>
    <property type="match status" value="1"/>
</dbReference>
<dbReference type="PANTHER" id="PTHR47245:SF2">
    <property type="entry name" value="PEPTIDYL-PROLYL CIS-TRANS ISOMERASE HP_0175-RELATED"/>
    <property type="match status" value="1"/>
</dbReference>
<dbReference type="PANTHER" id="PTHR47245">
    <property type="entry name" value="PEPTIDYLPROLYL ISOMERASE"/>
    <property type="match status" value="1"/>
</dbReference>
<dbReference type="Pfam" id="PF00639">
    <property type="entry name" value="Rotamase"/>
    <property type="match status" value="1"/>
</dbReference>
<dbReference type="SUPFAM" id="SSF54534">
    <property type="entry name" value="FKBP-like"/>
    <property type="match status" value="1"/>
</dbReference>
<dbReference type="PROSITE" id="PS01096">
    <property type="entry name" value="PPIC_PPIASE_1"/>
    <property type="match status" value="1"/>
</dbReference>
<dbReference type="PROSITE" id="PS50198">
    <property type="entry name" value="PPIC_PPIASE_2"/>
    <property type="match status" value="1"/>
</dbReference>
<reference key="1">
    <citation type="journal article" date="1987" name="Eur. J. Biochem.">
        <title>The nucleotide sequence of the nifM gene of Klebsiella pneumoniae and identification of a new nif gene: nifZ.</title>
        <authorList>
            <person name="Paul W."/>
            <person name="Merrick M.J."/>
        </authorList>
    </citation>
    <scope>NUCLEOTIDE SEQUENCE [GENOMIC DNA]</scope>
    <source>
        <strain>M5a1</strain>
    </source>
</reference>
<name>NIFM_KLEOX</name>
<accession>P0A3Z0</accession>
<accession>P08534</accession>
<comment type="function">
    <text>Required for the activation and stabilization of the iron-component (NifH) of nitrogenase. Probable PPIase.</text>
</comment>
<comment type="catalytic activity">
    <reaction>
        <text>[protein]-peptidylproline (omega=180) = [protein]-peptidylproline (omega=0)</text>
        <dbReference type="Rhea" id="RHEA:16237"/>
        <dbReference type="Rhea" id="RHEA-COMP:10747"/>
        <dbReference type="Rhea" id="RHEA-COMP:10748"/>
        <dbReference type="ChEBI" id="CHEBI:83833"/>
        <dbReference type="ChEBI" id="CHEBI:83834"/>
        <dbReference type="EC" id="5.2.1.8"/>
    </reaction>
</comment>
<comment type="similarity">
    <text evidence="2">Belongs to the PpiC/parvulin rotamase family.</text>
</comment>
<sequence length="266" mass="30613">MNPWQRFARQRLARSRWNRDPAALDPADTPAFEQAWQRQCHMEQTIVARVPEGDIPAALLENIAASLAIWLDEGDFAPPERAAIVRHHARLELAFADIARQAPQPDLSTVQAWYLRHQTQFMRPEQRLTRHLLLTVDNDREAVHQRILGLYRQINASRDAFAPLAQRHSHCPSALEEGRLGWISRGLLYPQLETALFSLAENALSLPIASELGWHLLWCEAIRPAAPMEPQQALESARDYLWQQSQQRHQRQWLEQMISRQPGLCG</sequence>
<keyword id="KW-0413">Isomerase</keyword>
<keyword id="KW-0535">Nitrogen fixation</keyword>
<keyword id="KW-0697">Rotamase</keyword>
<feature type="chain" id="PRO_0000193429" description="Putative peptidyl-prolyl cis-trans isomerase NifM">
    <location>
        <begin position="1"/>
        <end position="266"/>
    </location>
</feature>
<feature type="domain" description="PpiC" evidence="1">
    <location>
        <begin position="124"/>
        <end position="221"/>
    </location>
</feature>
<proteinExistence type="inferred from homology"/>
<protein>
    <recommendedName>
        <fullName>Putative peptidyl-prolyl cis-trans isomerase NifM</fullName>
        <shortName>PPIase NifM</shortName>
        <ecNumber>5.2.1.8</ecNumber>
    </recommendedName>
    <alternativeName>
        <fullName>Rotamase NifM</fullName>
    </alternativeName>
</protein>